<organism>
    <name type="scientific">Pectobacterium atrosepticum (strain SCRI 1043 / ATCC BAA-672)</name>
    <name type="common">Erwinia carotovora subsp. atroseptica</name>
    <dbReference type="NCBI Taxonomy" id="218491"/>
    <lineage>
        <taxon>Bacteria</taxon>
        <taxon>Pseudomonadati</taxon>
        <taxon>Pseudomonadota</taxon>
        <taxon>Gammaproteobacteria</taxon>
        <taxon>Enterobacterales</taxon>
        <taxon>Pectobacteriaceae</taxon>
        <taxon>Pectobacterium</taxon>
    </lineage>
</organism>
<protein>
    <recommendedName>
        <fullName evidence="1">Large ribosomal subunit protein uL29</fullName>
    </recommendedName>
    <alternativeName>
        <fullName evidence="2">50S ribosomal protein L29</fullName>
    </alternativeName>
</protein>
<proteinExistence type="inferred from homology"/>
<accession>Q6CZX8</accession>
<comment type="similarity">
    <text evidence="1">Belongs to the universal ribosomal protein uL29 family.</text>
</comment>
<gene>
    <name evidence="1" type="primary">rpmC</name>
    <name type="ordered locus">ECA4023</name>
</gene>
<reference key="1">
    <citation type="journal article" date="2004" name="Proc. Natl. Acad. Sci. U.S.A.">
        <title>Genome sequence of the enterobacterial phytopathogen Erwinia carotovora subsp. atroseptica and characterization of virulence factors.</title>
        <authorList>
            <person name="Bell K.S."/>
            <person name="Sebaihia M."/>
            <person name="Pritchard L."/>
            <person name="Holden M.T.G."/>
            <person name="Hyman L.J."/>
            <person name="Holeva M.C."/>
            <person name="Thomson N.R."/>
            <person name="Bentley S.D."/>
            <person name="Churcher L.J.C."/>
            <person name="Mungall K."/>
            <person name="Atkin R."/>
            <person name="Bason N."/>
            <person name="Brooks K."/>
            <person name="Chillingworth T."/>
            <person name="Clark K."/>
            <person name="Doggett J."/>
            <person name="Fraser A."/>
            <person name="Hance Z."/>
            <person name="Hauser H."/>
            <person name="Jagels K."/>
            <person name="Moule S."/>
            <person name="Norbertczak H."/>
            <person name="Ormond D."/>
            <person name="Price C."/>
            <person name="Quail M.A."/>
            <person name="Sanders M."/>
            <person name="Walker D."/>
            <person name="Whitehead S."/>
            <person name="Salmond G.P.C."/>
            <person name="Birch P.R.J."/>
            <person name="Parkhill J."/>
            <person name="Toth I.K."/>
        </authorList>
    </citation>
    <scope>NUCLEOTIDE SEQUENCE [LARGE SCALE GENOMIC DNA]</scope>
    <source>
        <strain>SCRI 1043 / ATCC BAA-672</strain>
    </source>
</reference>
<feature type="chain" id="PRO_0000130390" description="Large ribosomal subunit protein uL29">
    <location>
        <begin position="1"/>
        <end position="63"/>
    </location>
</feature>
<keyword id="KW-1185">Reference proteome</keyword>
<keyword id="KW-0687">Ribonucleoprotein</keyword>
<keyword id="KW-0689">Ribosomal protein</keyword>
<name>RL29_PECAS</name>
<evidence type="ECO:0000255" key="1">
    <source>
        <dbReference type="HAMAP-Rule" id="MF_00374"/>
    </source>
</evidence>
<evidence type="ECO:0000305" key="2"/>
<sequence length="63" mass="7200">MKANELREKSVEELNTELLGLLREQFNLRMQAASGQLQQTHMVKQVRHNIARVKTLLTQKAGA</sequence>
<dbReference type="EMBL" id="BX950851">
    <property type="protein sequence ID" value="CAG76920.1"/>
    <property type="molecule type" value="Genomic_DNA"/>
</dbReference>
<dbReference type="RefSeq" id="WP_011095506.1">
    <property type="nucleotide sequence ID" value="NC_004547.2"/>
</dbReference>
<dbReference type="SMR" id="Q6CZX8"/>
<dbReference type="STRING" id="218491.ECA4023"/>
<dbReference type="GeneID" id="57210687"/>
<dbReference type="KEGG" id="eca:ECA4023"/>
<dbReference type="PATRIC" id="fig|218491.5.peg.4089"/>
<dbReference type="eggNOG" id="COG0255">
    <property type="taxonomic scope" value="Bacteria"/>
</dbReference>
<dbReference type="HOGENOM" id="CLU_158491_1_2_6"/>
<dbReference type="OrthoDB" id="9815192at2"/>
<dbReference type="Proteomes" id="UP000007966">
    <property type="component" value="Chromosome"/>
</dbReference>
<dbReference type="GO" id="GO:0022625">
    <property type="term" value="C:cytosolic large ribosomal subunit"/>
    <property type="evidence" value="ECO:0007669"/>
    <property type="project" value="TreeGrafter"/>
</dbReference>
<dbReference type="GO" id="GO:0003735">
    <property type="term" value="F:structural constituent of ribosome"/>
    <property type="evidence" value="ECO:0007669"/>
    <property type="project" value="InterPro"/>
</dbReference>
<dbReference type="GO" id="GO:0006412">
    <property type="term" value="P:translation"/>
    <property type="evidence" value="ECO:0007669"/>
    <property type="project" value="UniProtKB-UniRule"/>
</dbReference>
<dbReference type="CDD" id="cd00427">
    <property type="entry name" value="Ribosomal_L29_HIP"/>
    <property type="match status" value="1"/>
</dbReference>
<dbReference type="FunFam" id="1.10.287.310:FF:000001">
    <property type="entry name" value="50S ribosomal protein L29"/>
    <property type="match status" value="1"/>
</dbReference>
<dbReference type="Gene3D" id="1.10.287.310">
    <property type="match status" value="1"/>
</dbReference>
<dbReference type="HAMAP" id="MF_00374">
    <property type="entry name" value="Ribosomal_uL29"/>
    <property type="match status" value="1"/>
</dbReference>
<dbReference type="InterPro" id="IPR050063">
    <property type="entry name" value="Ribosomal_protein_uL29"/>
</dbReference>
<dbReference type="InterPro" id="IPR001854">
    <property type="entry name" value="Ribosomal_uL29"/>
</dbReference>
<dbReference type="InterPro" id="IPR018254">
    <property type="entry name" value="Ribosomal_uL29_CS"/>
</dbReference>
<dbReference type="InterPro" id="IPR036049">
    <property type="entry name" value="Ribosomal_uL29_sf"/>
</dbReference>
<dbReference type="NCBIfam" id="TIGR00012">
    <property type="entry name" value="L29"/>
    <property type="match status" value="1"/>
</dbReference>
<dbReference type="PANTHER" id="PTHR10916">
    <property type="entry name" value="60S RIBOSOMAL PROTEIN L35/50S RIBOSOMAL PROTEIN L29"/>
    <property type="match status" value="1"/>
</dbReference>
<dbReference type="PANTHER" id="PTHR10916:SF0">
    <property type="entry name" value="LARGE RIBOSOMAL SUBUNIT PROTEIN UL29C"/>
    <property type="match status" value="1"/>
</dbReference>
<dbReference type="Pfam" id="PF00831">
    <property type="entry name" value="Ribosomal_L29"/>
    <property type="match status" value="1"/>
</dbReference>
<dbReference type="SUPFAM" id="SSF46561">
    <property type="entry name" value="Ribosomal protein L29 (L29p)"/>
    <property type="match status" value="1"/>
</dbReference>
<dbReference type="PROSITE" id="PS00579">
    <property type="entry name" value="RIBOSOMAL_L29"/>
    <property type="match status" value="1"/>
</dbReference>